<evidence type="ECO:0000255" key="1">
    <source>
        <dbReference type="HAMAP-Rule" id="MF_00107"/>
    </source>
</evidence>
<protein>
    <recommendedName>
        <fullName evidence="1">2-C-methyl-D-erythritol 2,4-cyclodiphosphate synthase</fullName>
        <shortName evidence="1">MECDP-synthase</shortName>
        <shortName evidence="1">MECPP-synthase</shortName>
        <shortName evidence="1">MECPS</shortName>
        <ecNumber evidence="1">4.6.1.12</ecNumber>
    </recommendedName>
</protein>
<comment type="function">
    <text evidence="1">Involved in the biosynthesis of isopentenyl diphosphate (IPP) and dimethylallyl diphosphate (DMAPP), two major building blocks of isoprenoid compounds. Catalyzes the conversion of 4-diphosphocytidyl-2-C-methyl-D-erythritol 2-phosphate (CDP-ME2P) to 2-C-methyl-D-erythritol 2,4-cyclodiphosphate (ME-CPP) with a corresponding release of cytidine 5-monophosphate (CMP).</text>
</comment>
<comment type="catalytic activity">
    <reaction evidence="1">
        <text>4-CDP-2-C-methyl-D-erythritol 2-phosphate = 2-C-methyl-D-erythritol 2,4-cyclic diphosphate + CMP</text>
        <dbReference type="Rhea" id="RHEA:23864"/>
        <dbReference type="ChEBI" id="CHEBI:57919"/>
        <dbReference type="ChEBI" id="CHEBI:58483"/>
        <dbReference type="ChEBI" id="CHEBI:60377"/>
        <dbReference type="EC" id="4.6.1.12"/>
    </reaction>
</comment>
<comment type="cofactor">
    <cofactor evidence="1">
        <name>a divalent metal cation</name>
        <dbReference type="ChEBI" id="CHEBI:60240"/>
    </cofactor>
    <text evidence="1">Binds 1 divalent metal cation per subunit.</text>
</comment>
<comment type="pathway">
    <text evidence="1">Isoprenoid biosynthesis; isopentenyl diphosphate biosynthesis via DXP pathway; isopentenyl diphosphate from 1-deoxy-D-xylulose 5-phosphate: step 4/6.</text>
</comment>
<comment type="subunit">
    <text evidence="1">Homotrimer.</text>
</comment>
<comment type="similarity">
    <text evidence="1">Belongs to the IspF family.</text>
</comment>
<reference key="1">
    <citation type="journal article" date="2006" name="Science">
        <title>Genomic islands and the ecology and evolution of Prochlorococcus.</title>
        <authorList>
            <person name="Coleman M.L."/>
            <person name="Sullivan M.B."/>
            <person name="Martiny A.C."/>
            <person name="Steglich C."/>
            <person name="Barry K."/>
            <person name="Delong E.F."/>
            <person name="Chisholm S.W."/>
        </authorList>
    </citation>
    <scope>NUCLEOTIDE SEQUENCE [LARGE SCALE GENOMIC DNA]</scope>
    <source>
        <strain>MIT 9312</strain>
    </source>
</reference>
<proteinExistence type="inferred from homology"/>
<keyword id="KW-0414">Isoprene biosynthesis</keyword>
<keyword id="KW-0456">Lyase</keyword>
<keyword id="KW-0479">Metal-binding</keyword>
<accession>Q319L1</accession>
<dbReference type="EC" id="4.6.1.12" evidence="1"/>
<dbReference type="EMBL" id="CP000111">
    <property type="protein sequence ID" value="ABB50434.1"/>
    <property type="molecule type" value="Genomic_DNA"/>
</dbReference>
<dbReference type="RefSeq" id="WP_011376920.1">
    <property type="nucleotide sequence ID" value="NC_007577.1"/>
</dbReference>
<dbReference type="SMR" id="Q319L1"/>
<dbReference type="STRING" id="74546.PMT9312_1374"/>
<dbReference type="KEGG" id="pmi:PMT9312_1374"/>
<dbReference type="eggNOG" id="COG0245">
    <property type="taxonomic scope" value="Bacteria"/>
</dbReference>
<dbReference type="HOGENOM" id="CLU_084630_2_0_3"/>
<dbReference type="OrthoDB" id="9807416at2"/>
<dbReference type="UniPathway" id="UPA00056">
    <property type="reaction ID" value="UER00095"/>
</dbReference>
<dbReference type="Proteomes" id="UP000002715">
    <property type="component" value="Chromosome"/>
</dbReference>
<dbReference type="GO" id="GO:0008685">
    <property type="term" value="F:2-C-methyl-D-erythritol 2,4-cyclodiphosphate synthase activity"/>
    <property type="evidence" value="ECO:0007669"/>
    <property type="project" value="UniProtKB-UniRule"/>
</dbReference>
<dbReference type="GO" id="GO:0046872">
    <property type="term" value="F:metal ion binding"/>
    <property type="evidence" value="ECO:0007669"/>
    <property type="project" value="UniProtKB-KW"/>
</dbReference>
<dbReference type="GO" id="GO:0019288">
    <property type="term" value="P:isopentenyl diphosphate biosynthetic process, methylerythritol 4-phosphate pathway"/>
    <property type="evidence" value="ECO:0007669"/>
    <property type="project" value="UniProtKB-UniRule"/>
</dbReference>
<dbReference type="GO" id="GO:0016114">
    <property type="term" value="P:terpenoid biosynthetic process"/>
    <property type="evidence" value="ECO:0007669"/>
    <property type="project" value="InterPro"/>
</dbReference>
<dbReference type="CDD" id="cd00554">
    <property type="entry name" value="MECDP_synthase"/>
    <property type="match status" value="1"/>
</dbReference>
<dbReference type="FunFam" id="3.30.1330.50:FF:000003">
    <property type="entry name" value="2-C-methyl-D-erythritol 2,4-cyclodiphosphate synthase"/>
    <property type="match status" value="1"/>
</dbReference>
<dbReference type="Gene3D" id="3.30.1330.50">
    <property type="entry name" value="2-C-methyl-D-erythritol 2,4-cyclodiphosphate synthase"/>
    <property type="match status" value="1"/>
</dbReference>
<dbReference type="HAMAP" id="MF_00107">
    <property type="entry name" value="IspF"/>
    <property type="match status" value="1"/>
</dbReference>
<dbReference type="InterPro" id="IPR003526">
    <property type="entry name" value="MECDP_synthase"/>
</dbReference>
<dbReference type="InterPro" id="IPR020555">
    <property type="entry name" value="MECDP_synthase_CS"/>
</dbReference>
<dbReference type="InterPro" id="IPR036571">
    <property type="entry name" value="MECDP_synthase_sf"/>
</dbReference>
<dbReference type="NCBIfam" id="TIGR00151">
    <property type="entry name" value="ispF"/>
    <property type="match status" value="1"/>
</dbReference>
<dbReference type="PANTHER" id="PTHR43181">
    <property type="entry name" value="2-C-METHYL-D-ERYTHRITOL 2,4-CYCLODIPHOSPHATE SYNTHASE, CHLOROPLASTIC"/>
    <property type="match status" value="1"/>
</dbReference>
<dbReference type="PANTHER" id="PTHR43181:SF1">
    <property type="entry name" value="2-C-METHYL-D-ERYTHRITOL 2,4-CYCLODIPHOSPHATE SYNTHASE, CHLOROPLASTIC"/>
    <property type="match status" value="1"/>
</dbReference>
<dbReference type="Pfam" id="PF02542">
    <property type="entry name" value="YgbB"/>
    <property type="match status" value="1"/>
</dbReference>
<dbReference type="SUPFAM" id="SSF69765">
    <property type="entry name" value="IpsF-like"/>
    <property type="match status" value="1"/>
</dbReference>
<dbReference type="PROSITE" id="PS01350">
    <property type="entry name" value="ISPF"/>
    <property type="match status" value="1"/>
</dbReference>
<feature type="chain" id="PRO_0000237740" description="2-C-methyl-D-erythritol 2,4-cyclodiphosphate synthase">
    <location>
        <begin position="1"/>
        <end position="167"/>
    </location>
</feature>
<feature type="binding site" evidence="1">
    <location>
        <begin position="15"/>
        <end position="17"/>
    </location>
    <ligand>
        <name>4-CDP-2-C-methyl-D-erythritol 2-phosphate</name>
        <dbReference type="ChEBI" id="CHEBI:57919"/>
    </ligand>
</feature>
<feature type="binding site" evidence="1">
    <location>
        <position position="15"/>
    </location>
    <ligand>
        <name>a divalent metal cation</name>
        <dbReference type="ChEBI" id="CHEBI:60240"/>
    </ligand>
</feature>
<feature type="binding site" evidence="1">
    <location>
        <position position="17"/>
    </location>
    <ligand>
        <name>a divalent metal cation</name>
        <dbReference type="ChEBI" id="CHEBI:60240"/>
    </ligand>
</feature>
<feature type="binding site" evidence="1">
    <location>
        <begin position="43"/>
        <end position="44"/>
    </location>
    <ligand>
        <name>4-CDP-2-C-methyl-D-erythritol 2-phosphate</name>
        <dbReference type="ChEBI" id="CHEBI:57919"/>
    </ligand>
</feature>
<feature type="binding site" evidence="1">
    <location>
        <position position="51"/>
    </location>
    <ligand>
        <name>a divalent metal cation</name>
        <dbReference type="ChEBI" id="CHEBI:60240"/>
    </ligand>
</feature>
<feature type="binding site" evidence="1">
    <location>
        <begin position="65"/>
        <end position="67"/>
    </location>
    <ligand>
        <name>4-CDP-2-C-methyl-D-erythritol 2-phosphate</name>
        <dbReference type="ChEBI" id="CHEBI:57919"/>
    </ligand>
</feature>
<feature type="binding site" evidence="1">
    <location>
        <begin position="141"/>
        <end position="144"/>
    </location>
    <ligand>
        <name>4-CDP-2-C-methyl-D-erythritol 2-phosphate</name>
        <dbReference type="ChEBI" id="CHEBI:57919"/>
    </ligand>
</feature>
<feature type="binding site" evidence="1">
    <location>
        <position position="151"/>
    </location>
    <ligand>
        <name>4-CDP-2-C-methyl-D-erythritol 2-phosphate</name>
        <dbReference type="ChEBI" id="CHEBI:57919"/>
    </ligand>
</feature>
<feature type="site" description="Transition state stabilizer" evidence="1">
    <location>
        <position position="43"/>
    </location>
</feature>
<feature type="site" description="Transition state stabilizer" evidence="1">
    <location>
        <position position="142"/>
    </location>
</feature>
<organism>
    <name type="scientific">Prochlorococcus marinus (strain MIT 9312)</name>
    <dbReference type="NCBI Taxonomy" id="74546"/>
    <lineage>
        <taxon>Bacteria</taxon>
        <taxon>Bacillati</taxon>
        <taxon>Cyanobacteriota</taxon>
        <taxon>Cyanophyceae</taxon>
        <taxon>Synechococcales</taxon>
        <taxon>Prochlorococcaceae</taxon>
        <taxon>Prochlorococcus</taxon>
    </lineage>
</organism>
<name>ISPF_PROM9</name>
<gene>
    <name evidence="1" type="primary">ispF</name>
    <name type="ordered locus">PMT9312_1374</name>
</gene>
<sequence>MNDFTPKFRIGNGYDIHRLVTGRKLIIGGVNLKHPDNLGLDGHSDADVLTHSIMDALLGALSLGDIGKYFPPSDDKWKDVDSLILLSKVIDLVRKQGWEINNIDSVLVAERPKIKPFVEIMKKNLSNTLKIDNSFIGIKATTNEKLGPEGREEGISCHSVVLLEKKE</sequence>